<dbReference type="EMBL" id="AF159241">
    <property type="protein sequence ID" value="AAD43567.1"/>
    <property type="molecule type" value="mRNA"/>
</dbReference>
<dbReference type="EMBL" id="AAFI02000070">
    <property type="protein sequence ID" value="EAL65075.1"/>
    <property type="molecule type" value="Genomic_DNA"/>
</dbReference>
<dbReference type="RefSeq" id="XP_638477.1">
    <property type="nucleotide sequence ID" value="XM_633385.1"/>
</dbReference>
<dbReference type="SMR" id="Q9Y0C9"/>
<dbReference type="FunCoup" id="Q9Y0C9">
    <property type="interactions" value="506"/>
</dbReference>
<dbReference type="STRING" id="44689.Q9Y0C9"/>
<dbReference type="GlyGen" id="Q9Y0C9">
    <property type="glycosylation" value="1 site"/>
</dbReference>
<dbReference type="PaxDb" id="44689-DDB0304430"/>
<dbReference type="EnsemblProtists" id="EAL65075">
    <property type="protein sequence ID" value="EAL65075"/>
    <property type="gene ID" value="DDB_G0284611"/>
</dbReference>
<dbReference type="GeneID" id="8624728"/>
<dbReference type="KEGG" id="ddi:DDB_G0284611"/>
<dbReference type="VEuPathDB" id="AmoebaDB:DDB_G0284611"/>
<dbReference type="eggNOG" id="ENOG502RFE8">
    <property type="taxonomic scope" value="Eukaryota"/>
</dbReference>
<dbReference type="InParanoid" id="Q9Y0C9"/>
<dbReference type="OMA" id="IINARQT"/>
<dbReference type="Reactome" id="R-DDI-1257604">
    <property type="pathway name" value="PIP3 activates AKT signaling"/>
</dbReference>
<dbReference type="Reactome" id="R-DDI-389357">
    <property type="pathway name" value="CD28 dependent PI3K/Akt signaling"/>
</dbReference>
<dbReference type="Reactome" id="R-DDI-5218920">
    <property type="pathway name" value="VEGFR2 mediated vascular permeability"/>
</dbReference>
<dbReference type="Reactome" id="R-DDI-6804757">
    <property type="pathway name" value="Regulation of TP53 Degradation"/>
</dbReference>
<dbReference type="Reactome" id="R-DDI-9856530">
    <property type="pathway name" value="High laminar flow shear stress activates signaling by PIEZO1 and PECAM1:CDH5:KDR in endothelial cells"/>
</dbReference>
<dbReference type="PRO" id="PR:Q9Y0C9"/>
<dbReference type="Proteomes" id="UP000002195">
    <property type="component" value="Chromosome 4"/>
</dbReference>
<dbReference type="GO" id="GO:0005737">
    <property type="term" value="C:cytoplasm"/>
    <property type="evidence" value="ECO:0000318"/>
    <property type="project" value="GO_Central"/>
</dbReference>
<dbReference type="GO" id="GO:0005886">
    <property type="term" value="C:plasma membrane"/>
    <property type="evidence" value="ECO:0000318"/>
    <property type="project" value="GO_Central"/>
</dbReference>
<dbReference type="GO" id="GO:0031932">
    <property type="term" value="C:TORC2 complex"/>
    <property type="evidence" value="ECO:0000314"/>
    <property type="project" value="dictyBase"/>
</dbReference>
<dbReference type="GO" id="GO:0010856">
    <property type="term" value="F:adenylate cyclase activator activity"/>
    <property type="evidence" value="ECO:0000314"/>
    <property type="project" value="dictyBase"/>
</dbReference>
<dbReference type="GO" id="GO:0005546">
    <property type="term" value="F:phosphatidylinositol-4,5-bisphosphate binding"/>
    <property type="evidence" value="ECO:0000318"/>
    <property type="project" value="GO_Central"/>
</dbReference>
<dbReference type="GO" id="GO:0004860">
    <property type="term" value="F:protein kinase inhibitor activity"/>
    <property type="evidence" value="ECO:0000315"/>
    <property type="project" value="dictyBase"/>
</dbReference>
<dbReference type="GO" id="GO:0019887">
    <property type="term" value="F:protein kinase regulator activity"/>
    <property type="evidence" value="ECO:0000314"/>
    <property type="project" value="dictyBase"/>
</dbReference>
<dbReference type="GO" id="GO:0031267">
    <property type="term" value="F:small GTPase binding"/>
    <property type="evidence" value="ECO:0000353"/>
    <property type="project" value="dictyBase"/>
</dbReference>
<dbReference type="GO" id="GO:0031152">
    <property type="term" value="P:aggregation involved in sorocarp development"/>
    <property type="evidence" value="ECO:0000315"/>
    <property type="project" value="dictyBase"/>
</dbReference>
<dbReference type="GO" id="GO:0043327">
    <property type="term" value="P:chemotaxis to cAMP"/>
    <property type="evidence" value="ECO:0000315"/>
    <property type="project" value="dictyBase"/>
</dbReference>
<dbReference type="GO" id="GO:0050765">
    <property type="term" value="P:negative regulation of phagocytosis"/>
    <property type="evidence" value="ECO:0000315"/>
    <property type="project" value="dictyBase"/>
</dbReference>
<dbReference type="GO" id="GO:0051897">
    <property type="term" value="P:positive regulation of phosphatidylinositol 3-kinase/protein kinase B signal transduction"/>
    <property type="evidence" value="ECO:0000315"/>
    <property type="project" value="dictyBase"/>
</dbReference>
<dbReference type="GO" id="GO:1904515">
    <property type="term" value="P:positive regulation of TORC2 signaling"/>
    <property type="evidence" value="ECO:0000316"/>
    <property type="project" value="dictyBase"/>
</dbReference>
<dbReference type="GO" id="GO:0007168">
    <property type="term" value="P:receptor guanylyl cyclase signaling pathway"/>
    <property type="evidence" value="ECO:0000314"/>
    <property type="project" value="dictyBase"/>
</dbReference>
<dbReference type="GO" id="GO:0043520">
    <property type="term" value="P:regulation of myosin II filament assembly"/>
    <property type="evidence" value="ECO:0000315"/>
    <property type="project" value="dictyBase"/>
</dbReference>
<dbReference type="GO" id="GO:0051602">
    <property type="term" value="P:response to electrical stimulus"/>
    <property type="evidence" value="ECO:0000315"/>
    <property type="project" value="dictyBase"/>
</dbReference>
<dbReference type="GO" id="GO:0038203">
    <property type="term" value="P:TORC2 signaling"/>
    <property type="evidence" value="ECO:0000314"/>
    <property type="project" value="dictyBase"/>
</dbReference>
<dbReference type="InterPro" id="IPR031567">
    <property type="entry name" value="CRIM_dom"/>
</dbReference>
<dbReference type="InterPro" id="IPR003116">
    <property type="entry name" value="RBD_dom"/>
</dbReference>
<dbReference type="InterPro" id="IPR008828">
    <property type="entry name" value="Sin1/Avo1"/>
</dbReference>
<dbReference type="PANTHER" id="PTHR13335">
    <property type="entry name" value="TARGET OF RAPAMYCIN COMPLEX 2 SUBUNIT MAPKAP1"/>
    <property type="match status" value="1"/>
</dbReference>
<dbReference type="PANTHER" id="PTHR13335:SF1">
    <property type="entry name" value="TARGET OF RAPAMYCIN COMPLEX 2 SUBUNIT MAPKAP1"/>
    <property type="match status" value="1"/>
</dbReference>
<dbReference type="Pfam" id="PF16978">
    <property type="entry name" value="CRIM"/>
    <property type="match status" value="1"/>
</dbReference>
<dbReference type="Pfam" id="PF02196">
    <property type="entry name" value="RBD"/>
    <property type="match status" value="1"/>
</dbReference>
<name>RIP3_DICDI</name>
<gene>
    <name type="primary">ripA</name>
    <name type="synonym">rip3</name>
    <name type="ORF">DDB_G0284611</name>
</gene>
<accession>Q9Y0C9</accession>
<accession>Q54P98</accession>
<protein>
    <recommendedName>
        <fullName>Ras-interacting protein RIP3</fullName>
    </recommendedName>
    <alternativeName>
        <fullName>Ras-interacting protein A</fullName>
    </alternativeName>
</protein>
<sequence>MSVYCELVDVVQQIRYKTQIFYETFKRDSIAEQIYNFSNESTSEIDPDIPFSKSLDKDYSLLYRPVSTSNNNATSGNSTPPNNAISPNQQQQQQQQAQQQQQQQQQQQQQQQHQQQQQQQQQQQQQQQQQQQQQQAQQQQQQAQQQAQVQAQQQQQKPTTATTASTVTTTPQQQPSPNNTTSSCTSSSSGSSSGTTNTTSNTTTSTNTSTVTSATNSSTISSLTSTNASTSSAYSTDQQKPNQPPQQPQNISQPQNISQQQNTNNVQQNNQQQQQQQQQQQQQQTSTSPKKCKIVTFTGTSVKLNSKTLQKSDKTSEKENKQQQPDSSKTQQQQQAQQQQSQQQQQAQQQQQQQQQQQQQQQQQQQQQQQQQQQQQQQPVFIFVKEKVNKVNHDLPITPPPSLLTRLVKPNSEEAEYGDIVPPPGMGLTLSIHTGNTGAGQLKVRVIEKATIIQTIFATLKLHHNNGGTGLIPDPKAYNLRIADSNGRIDQDFPPLDPNQYITKFKDEVLVLCPNPKFDLKKSSSSLSISGGVPQQNNNNSVNSNSSNNSNSSNNNMKSSGFQPQQSQQQQQQTQQTQQTQQQAQQAPQQQQSQQQQQQQQQHPQQIQQQLSSNQLQPDQVGGGGGGGGGNFHRTHHRNVSSGPDAPLVVKITLPDSSITKVVFQKTMLLKDLLESTCKKRKLLISDHYFTLENGQTCNGTLPMEKLGGADLILVSRRPIEQMTALSPTDTDSTGSSSDLQQDIFWYDALAWQYKTYEVTKTKKYGPKQDRIIGIDRERVTNMSPKDTETKRPARLIKDISKVALLEKPKYFTIEYNDGKSYIYEAKTTSLANNYLCK</sequence>
<organism>
    <name type="scientific">Dictyostelium discoideum</name>
    <name type="common">Social amoeba</name>
    <dbReference type="NCBI Taxonomy" id="44689"/>
    <lineage>
        <taxon>Eukaryota</taxon>
        <taxon>Amoebozoa</taxon>
        <taxon>Evosea</taxon>
        <taxon>Eumycetozoa</taxon>
        <taxon>Dictyostelia</taxon>
        <taxon>Dictyosteliales</taxon>
        <taxon>Dictyosteliaceae</taxon>
        <taxon>Dictyostelium</taxon>
    </lineage>
</organism>
<feature type="chain" id="PRO_0000328037" description="Ras-interacting protein RIP3">
    <location>
        <begin position="1"/>
        <end position="838"/>
    </location>
</feature>
<feature type="domain" description="CRIM" evidence="1">
    <location>
        <begin position="441"/>
        <end position="515"/>
    </location>
</feature>
<feature type="domain" description="RBD">
    <location>
        <begin position="648"/>
        <end position="717"/>
    </location>
</feature>
<feature type="region of interest" description="Disordered" evidence="2">
    <location>
        <begin position="66"/>
        <end position="97"/>
    </location>
</feature>
<feature type="region of interest" description="Disordered" evidence="2">
    <location>
        <begin position="157"/>
        <end position="290"/>
    </location>
</feature>
<feature type="region of interest" description="Disordered" evidence="2">
    <location>
        <begin position="305"/>
        <end position="336"/>
    </location>
</feature>
<feature type="region of interest" description="Disordered" evidence="2">
    <location>
        <begin position="522"/>
        <end position="581"/>
    </location>
</feature>
<feature type="region of interest" description="Disordered" evidence="2">
    <location>
        <begin position="594"/>
        <end position="646"/>
    </location>
</feature>
<feature type="compositionally biased region" description="Low complexity" evidence="2">
    <location>
        <begin position="67"/>
        <end position="97"/>
    </location>
</feature>
<feature type="compositionally biased region" description="Low complexity" evidence="2">
    <location>
        <begin position="157"/>
        <end position="241"/>
    </location>
</feature>
<feature type="compositionally biased region" description="Low complexity" evidence="2">
    <location>
        <begin position="248"/>
        <end position="284"/>
    </location>
</feature>
<feature type="compositionally biased region" description="Basic and acidic residues" evidence="2">
    <location>
        <begin position="310"/>
        <end position="321"/>
    </location>
</feature>
<feature type="compositionally biased region" description="Low complexity" evidence="2">
    <location>
        <begin position="537"/>
        <end position="556"/>
    </location>
</feature>
<feature type="compositionally biased region" description="Low complexity" evidence="2">
    <location>
        <begin position="563"/>
        <end position="581"/>
    </location>
</feature>
<feature type="compositionally biased region" description="Low complexity" evidence="2">
    <location>
        <begin position="594"/>
        <end position="620"/>
    </location>
</feature>
<feature type="compositionally biased region" description="Gly residues" evidence="2">
    <location>
        <begin position="621"/>
        <end position="631"/>
    </location>
</feature>
<feature type="mutagenesis site" description="Loss of interaction with rasG-GTP; when associated with arg-681." evidence="4">
    <original>K</original>
    <variation>E</variation>
    <location>
        <position position="680"/>
    </location>
</feature>
<feature type="mutagenesis site" description="Loss of interaction with rasG-GTP; when associated with Lys-680." evidence="4">
    <original>R</original>
    <variation>E</variation>
    <location>
        <position position="681"/>
    </location>
</feature>
<comment type="function">
    <text evidence="3 4">Component of a Ras-regulated pathway involved in integrating chemotaxis and signal relay pathways that are essential for aggregation.</text>
</comment>
<comment type="subunit">
    <text evidence="3 4">Interacts with activated RasG. Part of a complex, TORC2, consisting of tor, lst8, piaA and ripA. Additional proteins, such as 14-3-3 and heat-shock proteins, may also belong to the TORC2 complex.</text>
</comment>
<comment type="disruption phenotype">
    <text evidence="3 4">Null cells have serious developmental defects, because they are unable to activate the aggregation-stage adenylyl cyclase acaA in response to chemoattractant and are defective in chemotaxis. Cells are unable to properly polarize in a cAMP gradient.</text>
</comment>
<comment type="similarity">
    <text evidence="5">Belongs to the SIN1 family.</text>
</comment>
<keyword id="KW-0145">Chemotaxis</keyword>
<keyword id="KW-1185">Reference proteome</keyword>
<proteinExistence type="evidence at protein level"/>
<reference key="1">
    <citation type="journal article" date="1999" name="Mol. Biol. Cell">
        <title>A novel Ras-interacting protein required for chemotaxis and cyclic adenosine monophosphate signal relay in Dictyostelium.</title>
        <authorList>
            <person name="Lee S."/>
            <person name="Parent C.A."/>
            <person name="Insall R."/>
            <person name="Firtel R.A."/>
        </authorList>
    </citation>
    <scope>NUCLEOTIDE SEQUENCE [MRNA]</scope>
    <scope>FUNCTION</scope>
    <scope>INTERACTION WITH RASG</scope>
    <scope>DISRUPTION PHENOTYPE</scope>
</reference>
<reference key="2">
    <citation type="journal article" date="2005" name="Nature">
        <title>The genome of the social amoeba Dictyostelium discoideum.</title>
        <authorList>
            <person name="Eichinger L."/>
            <person name="Pachebat J.A."/>
            <person name="Gloeckner G."/>
            <person name="Rajandream M.A."/>
            <person name="Sucgang R."/>
            <person name="Berriman M."/>
            <person name="Song J."/>
            <person name="Olsen R."/>
            <person name="Szafranski K."/>
            <person name="Xu Q."/>
            <person name="Tunggal B."/>
            <person name="Kummerfeld S."/>
            <person name="Madera M."/>
            <person name="Konfortov B.A."/>
            <person name="Rivero F."/>
            <person name="Bankier A.T."/>
            <person name="Lehmann R."/>
            <person name="Hamlin N."/>
            <person name="Davies R."/>
            <person name="Gaudet P."/>
            <person name="Fey P."/>
            <person name="Pilcher K."/>
            <person name="Chen G."/>
            <person name="Saunders D."/>
            <person name="Sodergren E.J."/>
            <person name="Davis P."/>
            <person name="Kerhornou A."/>
            <person name="Nie X."/>
            <person name="Hall N."/>
            <person name="Anjard C."/>
            <person name="Hemphill L."/>
            <person name="Bason N."/>
            <person name="Farbrother P."/>
            <person name="Desany B."/>
            <person name="Just E."/>
            <person name="Morio T."/>
            <person name="Rost R."/>
            <person name="Churcher C.M."/>
            <person name="Cooper J."/>
            <person name="Haydock S."/>
            <person name="van Driessche N."/>
            <person name="Cronin A."/>
            <person name="Goodhead I."/>
            <person name="Muzny D.M."/>
            <person name="Mourier T."/>
            <person name="Pain A."/>
            <person name="Lu M."/>
            <person name="Harper D."/>
            <person name="Lindsay R."/>
            <person name="Hauser H."/>
            <person name="James K.D."/>
            <person name="Quiles M."/>
            <person name="Madan Babu M."/>
            <person name="Saito T."/>
            <person name="Buchrieser C."/>
            <person name="Wardroper A."/>
            <person name="Felder M."/>
            <person name="Thangavelu M."/>
            <person name="Johnson D."/>
            <person name="Knights A."/>
            <person name="Loulseged H."/>
            <person name="Mungall K.L."/>
            <person name="Oliver K."/>
            <person name="Price C."/>
            <person name="Quail M.A."/>
            <person name="Urushihara H."/>
            <person name="Hernandez J."/>
            <person name="Rabbinowitsch E."/>
            <person name="Steffen D."/>
            <person name="Sanders M."/>
            <person name="Ma J."/>
            <person name="Kohara Y."/>
            <person name="Sharp S."/>
            <person name="Simmonds M.N."/>
            <person name="Spiegler S."/>
            <person name="Tivey A."/>
            <person name="Sugano S."/>
            <person name="White B."/>
            <person name="Walker D."/>
            <person name="Woodward J.R."/>
            <person name="Winckler T."/>
            <person name="Tanaka Y."/>
            <person name="Shaulsky G."/>
            <person name="Schleicher M."/>
            <person name="Weinstock G.M."/>
            <person name="Rosenthal A."/>
            <person name="Cox E.C."/>
            <person name="Chisholm R.L."/>
            <person name="Gibbs R.A."/>
            <person name="Loomis W.F."/>
            <person name="Platzer M."/>
            <person name="Kay R.R."/>
            <person name="Williams J.G."/>
            <person name="Dear P.H."/>
            <person name="Noegel A.A."/>
            <person name="Barrell B.G."/>
            <person name="Kuspa A."/>
        </authorList>
    </citation>
    <scope>NUCLEOTIDE SEQUENCE [LARGE SCALE GENOMIC DNA]</scope>
    <source>
        <strain>AX4</strain>
    </source>
</reference>
<reference key="3">
    <citation type="journal article" date="2005" name="Mol. Biol. Cell">
        <title>TOR complex 2 integrates cell movement during chemotaxis and signal relay in Dictyostelium.</title>
        <authorList>
            <person name="Lee S."/>
            <person name="Comer F.I."/>
            <person name="Sasaki A."/>
            <person name="McLeod I.X."/>
            <person name="Duong Y."/>
            <person name="Okumura K."/>
            <person name="Yates J.R. III"/>
            <person name="Parent C.A."/>
            <person name="Firtel R.A."/>
        </authorList>
    </citation>
    <scope>FUNCTION</scope>
    <scope>IDENTIFICATION IN A TORC2 COMPLEX</scope>
    <scope>DISRUPTION PHENOTYPE</scope>
    <scope>MUTAGENESIS OF LYS-680 AND ARG-681</scope>
    <scope>IDENTIFICATION BY MASS SPECTROMETRY</scope>
    <scope>INTERACTION WITH RASG</scope>
</reference>
<evidence type="ECO:0000255" key="1"/>
<evidence type="ECO:0000256" key="2">
    <source>
        <dbReference type="SAM" id="MobiDB-lite"/>
    </source>
</evidence>
<evidence type="ECO:0000269" key="3">
    <source>
    </source>
</evidence>
<evidence type="ECO:0000269" key="4">
    <source>
    </source>
</evidence>
<evidence type="ECO:0000305" key="5"/>